<accession>Q6CNU6</accession>
<comment type="function">
    <text evidence="1">Catalyzes the first intracellular reaction of sulfate assimilation, forming adenosine-5'-phosphosulfate (APS) from inorganic sulfate and ATP. Plays an important role in sulfate activation as a component of the biosynthesis pathway of sulfur-containing amino acids.</text>
</comment>
<comment type="catalytic activity">
    <reaction evidence="1">
        <text>sulfate + ATP + H(+) = adenosine 5'-phosphosulfate + diphosphate</text>
        <dbReference type="Rhea" id="RHEA:18133"/>
        <dbReference type="ChEBI" id="CHEBI:15378"/>
        <dbReference type="ChEBI" id="CHEBI:16189"/>
        <dbReference type="ChEBI" id="CHEBI:30616"/>
        <dbReference type="ChEBI" id="CHEBI:33019"/>
        <dbReference type="ChEBI" id="CHEBI:58243"/>
        <dbReference type="EC" id="2.7.7.4"/>
    </reaction>
</comment>
<comment type="pathway">
    <text evidence="1">Sulfur metabolism; hydrogen sulfide biosynthesis; sulfite from sulfate: step 1/3.</text>
</comment>
<comment type="subunit">
    <text evidence="1">Homohexamer. Dimer of trimers.</text>
</comment>
<comment type="subcellular location">
    <subcellularLocation>
        <location evidence="1">Cytoplasm</location>
    </subcellularLocation>
</comment>
<comment type="domain">
    <text evidence="1">The oligomerization domain is distantly related to APS kinases, but it is not functional and does not bind APS. It is required for oligomerization of the enzyme, although the oligomerization state has no effect on the catalytic activity of the enzyme.</text>
</comment>
<comment type="similarity">
    <text evidence="1">Belongs to the sulfate adenylyltransferase family.</text>
</comment>
<reference key="1">
    <citation type="journal article" date="2004" name="Nature">
        <title>Genome evolution in yeasts.</title>
        <authorList>
            <person name="Dujon B."/>
            <person name="Sherman D."/>
            <person name="Fischer G."/>
            <person name="Durrens P."/>
            <person name="Casaregola S."/>
            <person name="Lafontaine I."/>
            <person name="de Montigny J."/>
            <person name="Marck C."/>
            <person name="Neuveglise C."/>
            <person name="Talla E."/>
            <person name="Goffard N."/>
            <person name="Frangeul L."/>
            <person name="Aigle M."/>
            <person name="Anthouard V."/>
            <person name="Babour A."/>
            <person name="Barbe V."/>
            <person name="Barnay S."/>
            <person name="Blanchin S."/>
            <person name="Beckerich J.-M."/>
            <person name="Beyne E."/>
            <person name="Bleykasten C."/>
            <person name="Boisrame A."/>
            <person name="Boyer J."/>
            <person name="Cattolico L."/>
            <person name="Confanioleri F."/>
            <person name="de Daruvar A."/>
            <person name="Despons L."/>
            <person name="Fabre E."/>
            <person name="Fairhead C."/>
            <person name="Ferry-Dumazet H."/>
            <person name="Groppi A."/>
            <person name="Hantraye F."/>
            <person name="Hennequin C."/>
            <person name="Jauniaux N."/>
            <person name="Joyet P."/>
            <person name="Kachouri R."/>
            <person name="Kerrest A."/>
            <person name="Koszul R."/>
            <person name="Lemaire M."/>
            <person name="Lesur I."/>
            <person name="Ma L."/>
            <person name="Muller H."/>
            <person name="Nicaud J.-M."/>
            <person name="Nikolski M."/>
            <person name="Oztas S."/>
            <person name="Ozier-Kalogeropoulos O."/>
            <person name="Pellenz S."/>
            <person name="Potier S."/>
            <person name="Richard G.-F."/>
            <person name="Straub M.-L."/>
            <person name="Suleau A."/>
            <person name="Swennen D."/>
            <person name="Tekaia F."/>
            <person name="Wesolowski-Louvel M."/>
            <person name="Westhof E."/>
            <person name="Wirth B."/>
            <person name="Zeniou-Meyer M."/>
            <person name="Zivanovic Y."/>
            <person name="Bolotin-Fukuhara M."/>
            <person name="Thierry A."/>
            <person name="Bouchier C."/>
            <person name="Caudron B."/>
            <person name="Scarpelli C."/>
            <person name="Gaillardin C."/>
            <person name="Weissenbach J."/>
            <person name="Wincker P."/>
            <person name="Souciet J.-L."/>
        </authorList>
    </citation>
    <scope>NUCLEOTIDE SEQUENCE [LARGE SCALE GENOMIC DNA]</scope>
    <source>
        <strain>ATCC 8585 / CBS 2359 / DSM 70799 / NBRC 1267 / NRRL Y-1140 / WM37</strain>
    </source>
</reference>
<gene>
    <name evidence="1" type="primary">MET3</name>
    <name type="ordered locus">KLLA0E09812g</name>
</gene>
<protein>
    <recommendedName>
        <fullName evidence="1">Sulfate adenylyltransferase</fullName>
        <ecNumber evidence="1">2.7.7.4</ecNumber>
    </recommendedName>
    <alternativeName>
        <fullName evidence="1">ATP-sulfurylase</fullName>
    </alternativeName>
    <alternativeName>
        <fullName evidence="1">Sulfate adenylate transferase</fullName>
        <shortName evidence="1">SAT</shortName>
    </alternativeName>
</protein>
<feature type="chain" id="PRO_0000283687" description="Sulfate adenylyltransferase">
    <location>
        <begin position="1"/>
        <end position="502"/>
    </location>
</feature>
<feature type="region of interest" description="N-terminal" evidence="1">
    <location>
        <begin position="1"/>
        <end position="167"/>
    </location>
</feature>
<feature type="region of interest" description="Catalytic" evidence="1">
    <location>
        <begin position="168"/>
        <end position="393"/>
    </location>
</feature>
<feature type="region of interest" description="Required for oligomerization; adenylyl-sulfate kinase-like" evidence="1">
    <location>
        <begin position="394"/>
        <end position="502"/>
    </location>
</feature>
<feature type="active site" evidence="1">
    <location>
        <position position="196"/>
    </location>
</feature>
<feature type="active site" evidence="1">
    <location>
        <position position="197"/>
    </location>
</feature>
<feature type="active site" evidence="1">
    <location>
        <position position="198"/>
    </location>
</feature>
<feature type="binding site" evidence="1">
    <location>
        <begin position="195"/>
        <end position="198"/>
    </location>
    <ligand>
        <name>ATP</name>
        <dbReference type="ChEBI" id="CHEBI:30616"/>
    </ligand>
</feature>
<feature type="binding site" evidence="1">
    <location>
        <position position="195"/>
    </location>
    <ligand>
        <name>sulfate</name>
        <dbReference type="ChEBI" id="CHEBI:16189"/>
    </ligand>
</feature>
<feature type="binding site" evidence="1">
    <location>
        <position position="197"/>
    </location>
    <ligand>
        <name>sulfate</name>
        <dbReference type="ChEBI" id="CHEBI:16189"/>
    </ligand>
</feature>
<feature type="binding site" evidence="1">
    <location>
        <begin position="289"/>
        <end position="292"/>
    </location>
    <ligand>
        <name>ATP</name>
        <dbReference type="ChEBI" id="CHEBI:30616"/>
    </ligand>
</feature>
<feature type="binding site" evidence="1">
    <location>
        <position position="293"/>
    </location>
    <ligand>
        <name>sulfate</name>
        <dbReference type="ChEBI" id="CHEBI:16189"/>
    </ligand>
</feature>
<feature type="binding site" evidence="1">
    <location>
        <position position="331"/>
    </location>
    <ligand>
        <name>ATP</name>
        <dbReference type="ChEBI" id="CHEBI:30616"/>
    </ligand>
</feature>
<feature type="site" description="Transition state stabilizer" evidence="1">
    <location>
        <position position="201"/>
    </location>
</feature>
<feature type="site" description="Transition state stabilizer" evidence="1">
    <location>
        <position position="204"/>
    </location>
</feature>
<feature type="site" description="Induces change in substrate recognition on ATP binding" evidence="1">
    <location>
        <position position="328"/>
    </location>
</feature>
<name>MET3_KLULA</name>
<sequence>MPSPHGGVLQDLVARDASKKAELLEIAQSGDLTSWSLTARQICDLELILNGGFSPLDGFLNQQDYQSVVEKSRLQNGLVWTIPITLDVDAEFASQLSPDQRIVLLQDNEFPLAILTVSDVYQPDKAVEAKKVFRGDPEHPAVKYLFEQAGEFYVGGSLEAIQLPVHYDYPGWRKTPAQLRLEFESKQWDRVVAFQTRNPMHRAHRELTVRAARSNNSKILIHPVVGLTKPGDIDHHTRVRVYQEIIKRYPNGMAQLSLLPLAMRMGGDREAVWHAIIRKNYGASHFIVGRDHAGPGKNSKGVDFYGPYDAQELVESYKNELDIEVVPFRMVTYLPDEDRYAPIDEIDTDKTRTLNISGTELRNRLRDGGEIPAWFSYPEVVKILRESNPSRPKQGFALVLSETLPAQLKTALLSTFLQYGGGRHYKVLEHGNNEEILALVPDFVRSGTGLILQNASSLKGTNVFKIGEESGSDIPLETEDKNILHIVQRVVLFLEDQGFFQF</sequence>
<organism>
    <name type="scientific">Kluyveromyces lactis (strain ATCC 8585 / CBS 2359 / DSM 70799 / NBRC 1267 / NRRL Y-1140 / WM37)</name>
    <name type="common">Yeast</name>
    <name type="synonym">Candida sphaerica</name>
    <dbReference type="NCBI Taxonomy" id="284590"/>
    <lineage>
        <taxon>Eukaryota</taxon>
        <taxon>Fungi</taxon>
        <taxon>Dikarya</taxon>
        <taxon>Ascomycota</taxon>
        <taxon>Saccharomycotina</taxon>
        <taxon>Saccharomycetes</taxon>
        <taxon>Saccharomycetales</taxon>
        <taxon>Saccharomycetaceae</taxon>
        <taxon>Kluyveromyces</taxon>
    </lineage>
</organism>
<proteinExistence type="inferred from homology"/>
<dbReference type="EC" id="2.7.7.4" evidence="1"/>
<dbReference type="EMBL" id="CR382125">
    <property type="protein sequence ID" value="CAG99480.1"/>
    <property type="molecule type" value="Genomic_DNA"/>
</dbReference>
<dbReference type="RefSeq" id="XP_454393.1">
    <property type="nucleotide sequence ID" value="XM_454393.1"/>
</dbReference>
<dbReference type="SMR" id="Q6CNU6"/>
<dbReference type="FunCoup" id="Q6CNU6">
    <property type="interactions" value="611"/>
</dbReference>
<dbReference type="STRING" id="284590.Q6CNU6"/>
<dbReference type="PaxDb" id="284590-Q6CNU6"/>
<dbReference type="KEGG" id="kla:KLLA0_E09835g"/>
<dbReference type="eggNOG" id="KOG0636">
    <property type="taxonomic scope" value="Eukaryota"/>
</dbReference>
<dbReference type="HOGENOM" id="CLU_022950_1_0_1"/>
<dbReference type="InParanoid" id="Q6CNU6"/>
<dbReference type="OMA" id="EWFSFPE"/>
<dbReference type="UniPathway" id="UPA00140">
    <property type="reaction ID" value="UER00204"/>
</dbReference>
<dbReference type="Proteomes" id="UP000000598">
    <property type="component" value="Chromosome E"/>
</dbReference>
<dbReference type="GO" id="GO:0005737">
    <property type="term" value="C:cytoplasm"/>
    <property type="evidence" value="ECO:0007669"/>
    <property type="project" value="UniProtKB-SubCell"/>
</dbReference>
<dbReference type="GO" id="GO:0005524">
    <property type="term" value="F:ATP binding"/>
    <property type="evidence" value="ECO:0007669"/>
    <property type="project" value="UniProtKB-KW"/>
</dbReference>
<dbReference type="GO" id="GO:0004781">
    <property type="term" value="F:sulfate adenylyltransferase (ATP) activity"/>
    <property type="evidence" value="ECO:0007669"/>
    <property type="project" value="UniProtKB-UniRule"/>
</dbReference>
<dbReference type="GO" id="GO:0019344">
    <property type="term" value="P:cysteine biosynthetic process"/>
    <property type="evidence" value="ECO:0007669"/>
    <property type="project" value="UniProtKB-KW"/>
</dbReference>
<dbReference type="GO" id="GO:0070814">
    <property type="term" value="P:hydrogen sulfide biosynthetic process"/>
    <property type="evidence" value="ECO:0007669"/>
    <property type="project" value="UniProtKB-UniRule"/>
</dbReference>
<dbReference type="GO" id="GO:0009086">
    <property type="term" value="P:methionine biosynthetic process"/>
    <property type="evidence" value="ECO:0007669"/>
    <property type="project" value="UniProtKB-KW"/>
</dbReference>
<dbReference type="GO" id="GO:0010134">
    <property type="term" value="P:sulfate assimilation via adenylyl sulfate reduction"/>
    <property type="evidence" value="ECO:0007669"/>
    <property type="project" value="TreeGrafter"/>
</dbReference>
<dbReference type="GO" id="GO:0019379">
    <property type="term" value="P:sulfate assimilation, phosphoadenylyl sulfate reduction by phosphoadenylyl-sulfate reductase (thioredoxin)"/>
    <property type="evidence" value="ECO:0007669"/>
    <property type="project" value="TreeGrafter"/>
</dbReference>
<dbReference type="CDD" id="cd00517">
    <property type="entry name" value="ATPS"/>
    <property type="match status" value="1"/>
</dbReference>
<dbReference type="FunFam" id="3.10.400.10:FF:000006">
    <property type="entry name" value="Sulfate adenylyltransferase"/>
    <property type="match status" value="1"/>
</dbReference>
<dbReference type="FunFam" id="3.40.50.620:FF:000052">
    <property type="entry name" value="Sulfate adenylyltransferase"/>
    <property type="match status" value="1"/>
</dbReference>
<dbReference type="Gene3D" id="3.40.50.620">
    <property type="entry name" value="HUPs"/>
    <property type="match status" value="1"/>
</dbReference>
<dbReference type="Gene3D" id="3.40.50.300">
    <property type="entry name" value="P-loop containing nucleotide triphosphate hydrolases"/>
    <property type="match status" value="1"/>
</dbReference>
<dbReference type="Gene3D" id="3.10.400.10">
    <property type="entry name" value="Sulfate adenylyltransferase"/>
    <property type="match status" value="1"/>
</dbReference>
<dbReference type="HAMAP" id="MF_03106">
    <property type="entry name" value="Sulf_adenylyltr_euk"/>
    <property type="match status" value="1"/>
</dbReference>
<dbReference type="InterPro" id="IPR025980">
    <property type="entry name" value="ATP-Sase_PUA-like_dom"/>
</dbReference>
<dbReference type="InterPro" id="IPR027417">
    <property type="entry name" value="P-loop_NTPase"/>
</dbReference>
<dbReference type="InterPro" id="IPR015947">
    <property type="entry name" value="PUA-like_sf"/>
</dbReference>
<dbReference type="InterPro" id="IPR014729">
    <property type="entry name" value="Rossmann-like_a/b/a_fold"/>
</dbReference>
<dbReference type="InterPro" id="IPR027535">
    <property type="entry name" value="Sulf_adenylyltr_euk"/>
</dbReference>
<dbReference type="InterPro" id="IPR050512">
    <property type="entry name" value="Sulf_AdTrans/APS_kinase"/>
</dbReference>
<dbReference type="InterPro" id="IPR024951">
    <property type="entry name" value="Sulfurylase_cat_dom"/>
</dbReference>
<dbReference type="InterPro" id="IPR002650">
    <property type="entry name" value="Sulphate_adenylyltransferase"/>
</dbReference>
<dbReference type="NCBIfam" id="TIGR00339">
    <property type="entry name" value="sopT"/>
    <property type="match status" value="1"/>
</dbReference>
<dbReference type="PANTHER" id="PTHR42700">
    <property type="entry name" value="SULFATE ADENYLYLTRANSFERASE"/>
    <property type="match status" value="1"/>
</dbReference>
<dbReference type="PANTHER" id="PTHR42700:SF1">
    <property type="entry name" value="SULFATE ADENYLYLTRANSFERASE"/>
    <property type="match status" value="1"/>
</dbReference>
<dbReference type="Pfam" id="PF01747">
    <property type="entry name" value="ATP-sulfurylase"/>
    <property type="match status" value="1"/>
</dbReference>
<dbReference type="Pfam" id="PF14306">
    <property type="entry name" value="PUA_2"/>
    <property type="match status" value="1"/>
</dbReference>
<dbReference type="SUPFAM" id="SSF52374">
    <property type="entry name" value="Nucleotidylyl transferase"/>
    <property type="match status" value="1"/>
</dbReference>
<dbReference type="SUPFAM" id="SSF52540">
    <property type="entry name" value="P-loop containing nucleoside triphosphate hydrolases"/>
    <property type="match status" value="1"/>
</dbReference>
<dbReference type="SUPFAM" id="SSF88697">
    <property type="entry name" value="PUA domain-like"/>
    <property type="match status" value="1"/>
</dbReference>
<evidence type="ECO:0000255" key="1">
    <source>
        <dbReference type="HAMAP-Rule" id="MF_03106"/>
    </source>
</evidence>
<keyword id="KW-0028">Amino-acid biosynthesis</keyword>
<keyword id="KW-0067">ATP-binding</keyword>
<keyword id="KW-0198">Cysteine biosynthesis</keyword>
<keyword id="KW-0963">Cytoplasm</keyword>
<keyword id="KW-0486">Methionine biosynthesis</keyword>
<keyword id="KW-0547">Nucleotide-binding</keyword>
<keyword id="KW-0548">Nucleotidyltransferase</keyword>
<keyword id="KW-1185">Reference proteome</keyword>
<keyword id="KW-0808">Transferase</keyword>